<keyword id="KW-0067">ATP-binding</keyword>
<keyword id="KW-0418">Kinase</keyword>
<keyword id="KW-0545">Nucleotide biosynthesis</keyword>
<keyword id="KW-0547">Nucleotide-binding</keyword>
<keyword id="KW-0808">Transferase</keyword>
<comment type="function">
    <text evidence="1">Phosphorylation of dTMP to form dTDP in both de novo and salvage pathways of dTTP synthesis.</text>
</comment>
<comment type="catalytic activity">
    <reaction evidence="1">
        <text>dTMP + ATP = dTDP + ADP</text>
        <dbReference type="Rhea" id="RHEA:13517"/>
        <dbReference type="ChEBI" id="CHEBI:30616"/>
        <dbReference type="ChEBI" id="CHEBI:58369"/>
        <dbReference type="ChEBI" id="CHEBI:63528"/>
        <dbReference type="ChEBI" id="CHEBI:456216"/>
        <dbReference type="EC" id="2.7.4.9"/>
    </reaction>
</comment>
<comment type="similarity">
    <text evidence="1">Belongs to the thymidylate kinase family.</text>
</comment>
<organism>
    <name type="scientific">Rickettsia rickettsii (strain Iowa)</name>
    <dbReference type="NCBI Taxonomy" id="452659"/>
    <lineage>
        <taxon>Bacteria</taxon>
        <taxon>Pseudomonadati</taxon>
        <taxon>Pseudomonadota</taxon>
        <taxon>Alphaproteobacteria</taxon>
        <taxon>Rickettsiales</taxon>
        <taxon>Rickettsiaceae</taxon>
        <taxon>Rickettsieae</taxon>
        <taxon>Rickettsia</taxon>
        <taxon>spotted fever group</taxon>
    </lineage>
</organism>
<name>KTHY_RICRO</name>
<sequence length="203" mass="23477">MNNLKQGKFITFEGGEGIGKSTQSQMLYEYLQSQNTPVILTREVGGTIVAEKMREILVHEELLPMSELFQAMAARYDHMARKIIPALQEGHIVICDRFIDSTVCYQGLELENGIDLVYNLHKTLMPSLMPDITFFIDVEPDTAIKRVNSRNMNNKFDIRGIDFYKKIYYCFKELSNRFPERIKTIKASDLSPLEVHELIKKHL</sequence>
<gene>
    <name evidence="1" type="primary">tmk</name>
    <name type="ordered locus">RrIowa_1248</name>
</gene>
<feature type="chain" id="PRO_1000076972" description="Thymidylate kinase">
    <location>
        <begin position="1"/>
        <end position="203"/>
    </location>
</feature>
<feature type="binding site" evidence="1">
    <location>
        <begin position="14"/>
        <end position="21"/>
    </location>
    <ligand>
        <name>ATP</name>
        <dbReference type="ChEBI" id="CHEBI:30616"/>
    </ligand>
</feature>
<reference key="1">
    <citation type="journal article" date="2008" name="Infect. Immun.">
        <title>Genomic comparison of virulent Rickettsia rickettsii Sheila Smith and avirulent Rickettsia rickettsii Iowa.</title>
        <authorList>
            <person name="Ellison D.W."/>
            <person name="Clark T.R."/>
            <person name="Sturdevant D.E."/>
            <person name="Virtaneva K."/>
            <person name="Porcella S.F."/>
            <person name="Hackstadt T."/>
        </authorList>
    </citation>
    <scope>NUCLEOTIDE SEQUENCE [LARGE SCALE GENOMIC DNA]</scope>
    <source>
        <strain>Iowa</strain>
    </source>
</reference>
<accession>B0BUU8</accession>
<proteinExistence type="inferred from homology"/>
<evidence type="ECO:0000255" key="1">
    <source>
        <dbReference type="HAMAP-Rule" id="MF_00165"/>
    </source>
</evidence>
<dbReference type="EC" id="2.7.4.9" evidence="1"/>
<dbReference type="EMBL" id="CP000766">
    <property type="protein sequence ID" value="ABY73008.1"/>
    <property type="molecule type" value="Genomic_DNA"/>
</dbReference>
<dbReference type="RefSeq" id="WP_012151189.1">
    <property type="nucleotide sequence ID" value="NC_010263.3"/>
</dbReference>
<dbReference type="SMR" id="B0BUU8"/>
<dbReference type="GeneID" id="79937707"/>
<dbReference type="KEGG" id="rrj:RrIowa_1248"/>
<dbReference type="eggNOG" id="COG0125">
    <property type="taxonomic scope" value="Bacteria"/>
</dbReference>
<dbReference type="HOGENOM" id="CLU_049131_0_2_5"/>
<dbReference type="Proteomes" id="UP000000796">
    <property type="component" value="Chromosome"/>
</dbReference>
<dbReference type="GO" id="GO:0005829">
    <property type="term" value="C:cytosol"/>
    <property type="evidence" value="ECO:0007669"/>
    <property type="project" value="TreeGrafter"/>
</dbReference>
<dbReference type="GO" id="GO:0005524">
    <property type="term" value="F:ATP binding"/>
    <property type="evidence" value="ECO:0007669"/>
    <property type="project" value="UniProtKB-UniRule"/>
</dbReference>
<dbReference type="GO" id="GO:0004798">
    <property type="term" value="F:dTMP kinase activity"/>
    <property type="evidence" value="ECO:0007669"/>
    <property type="project" value="UniProtKB-UniRule"/>
</dbReference>
<dbReference type="GO" id="GO:0006233">
    <property type="term" value="P:dTDP biosynthetic process"/>
    <property type="evidence" value="ECO:0007669"/>
    <property type="project" value="InterPro"/>
</dbReference>
<dbReference type="GO" id="GO:0006235">
    <property type="term" value="P:dTTP biosynthetic process"/>
    <property type="evidence" value="ECO:0007669"/>
    <property type="project" value="UniProtKB-UniRule"/>
</dbReference>
<dbReference type="GO" id="GO:0006227">
    <property type="term" value="P:dUDP biosynthetic process"/>
    <property type="evidence" value="ECO:0007669"/>
    <property type="project" value="TreeGrafter"/>
</dbReference>
<dbReference type="CDD" id="cd01672">
    <property type="entry name" value="TMPK"/>
    <property type="match status" value="1"/>
</dbReference>
<dbReference type="FunFam" id="3.40.50.300:FF:000225">
    <property type="entry name" value="Thymidylate kinase"/>
    <property type="match status" value="1"/>
</dbReference>
<dbReference type="Gene3D" id="3.40.50.300">
    <property type="entry name" value="P-loop containing nucleotide triphosphate hydrolases"/>
    <property type="match status" value="1"/>
</dbReference>
<dbReference type="HAMAP" id="MF_00165">
    <property type="entry name" value="Thymidylate_kinase"/>
    <property type="match status" value="1"/>
</dbReference>
<dbReference type="InterPro" id="IPR027417">
    <property type="entry name" value="P-loop_NTPase"/>
</dbReference>
<dbReference type="InterPro" id="IPR039430">
    <property type="entry name" value="Thymidylate_kin-like_dom"/>
</dbReference>
<dbReference type="InterPro" id="IPR018095">
    <property type="entry name" value="Thymidylate_kin_CS"/>
</dbReference>
<dbReference type="InterPro" id="IPR018094">
    <property type="entry name" value="Thymidylate_kinase"/>
</dbReference>
<dbReference type="NCBIfam" id="TIGR00041">
    <property type="entry name" value="DTMP_kinase"/>
    <property type="match status" value="1"/>
</dbReference>
<dbReference type="PANTHER" id="PTHR10344">
    <property type="entry name" value="THYMIDYLATE KINASE"/>
    <property type="match status" value="1"/>
</dbReference>
<dbReference type="PANTHER" id="PTHR10344:SF4">
    <property type="entry name" value="UMP-CMP KINASE 2, MITOCHONDRIAL"/>
    <property type="match status" value="1"/>
</dbReference>
<dbReference type="Pfam" id="PF02223">
    <property type="entry name" value="Thymidylate_kin"/>
    <property type="match status" value="1"/>
</dbReference>
<dbReference type="SUPFAM" id="SSF52540">
    <property type="entry name" value="P-loop containing nucleoside triphosphate hydrolases"/>
    <property type="match status" value="1"/>
</dbReference>
<dbReference type="PROSITE" id="PS01331">
    <property type="entry name" value="THYMIDYLATE_KINASE"/>
    <property type="match status" value="1"/>
</dbReference>
<protein>
    <recommendedName>
        <fullName evidence="1">Thymidylate kinase</fullName>
        <ecNumber evidence="1">2.7.4.9</ecNumber>
    </recommendedName>
    <alternativeName>
        <fullName evidence="1">dTMP kinase</fullName>
    </alternativeName>
</protein>